<comment type="function">
    <text evidence="1">One of two assembly initiator proteins, it binds directly to the 5'-end of the 23S rRNA, where it nucleates assembly of the 50S subunit.</text>
</comment>
<comment type="function">
    <text evidence="1">One of the proteins that surrounds the polypeptide exit tunnel on the outside of the subunit.</text>
</comment>
<comment type="subunit">
    <text evidence="1">Part of the 50S ribosomal subunit.</text>
</comment>
<comment type="similarity">
    <text evidence="1">Belongs to the universal ribosomal protein uL24 family.</text>
</comment>
<name>RL24_BARQU</name>
<evidence type="ECO:0000255" key="1">
    <source>
        <dbReference type="HAMAP-Rule" id="MF_01326"/>
    </source>
</evidence>
<evidence type="ECO:0000305" key="2"/>
<sequence>MQKIRKGDKVVVLSGKDKGCSGEVIKVNPKENKAFVRGVNMVKRHQRQTQKQEAGIVSKEAPIHLSNLAIADPKDGKPTRVGFRMNVDGNKVRFAKRSGELING</sequence>
<accession>Q6FZD3</accession>
<reference key="1">
    <citation type="journal article" date="2004" name="Proc. Natl. Acad. Sci. U.S.A.">
        <title>The louse-borne human pathogen Bartonella quintana is a genomic derivative of the zoonotic agent Bartonella henselae.</title>
        <authorList>
            <person name="Alsmark U.C.M."/>
            <person name="Frank A.C."/>
            <person name="Karlberg E.O."/>
            <person name="Legault B.-A."/>
            <person name="Ardell D.H."/>
            <person name="Canbaeck B."/>
            <person name="Eriksson A.-S."/>
            <person name="Naeslund A.K."/>
            <person name="Handley S.A."/>
            <person name="Huvet M."/>
            <person name="La Scola B."/>
            <person name="Holmberg M."/>
            <person name="Andersson S.G.E."/>
        </authorList>
    </citation>
    <scope>NUCLEOTIDE SEQUENCE [LARGE SCALE GENOMIC DNA]</scope>
    <source>
        <strain>Toulouse</strain>
    </source>
</reference>
<dbReference type="EMBL" id="BX897700">
    <property type="protein sequence ID" value="CAF26295.1"/>
    <property type="molecule type" value="Genomic_DNA"/>
</dbReference>
<dbReference type="RefSeq" id="WP_011179542.1">
    <property type="nucleotide sequence ID" value="NC_005955.1"/>
</dbReference>
<dbReference type="SMR" id="Q6FZD3"/>
<dbReference type="GeneID" id="56532832"/>
<dbReference type="KEGG" id="bqu:BQ08120"/>
<dbReference type="eggNOG" id="COG0198">
    <property type="taxonomic scope" value="Bacteria"/>
</dbReference>
<dbReference type="HOGENOM" id="CLU_093315_2_2_5"/>
<dbReference type="OrthoDB" id="9807419at2"/>
<dbReference type="Proteomes" id="UP000000597">
    <property type="component" value="Chromosome"/>
</dbReference>
<dbReference type="GO" id="GO:1990904">
    <property type="term" value="C:ribonucleoprotein complex"/>
    <property type="evidence" value="ECO:0007669"/>
    <property type="project" value="UniProtKB-KW"/>
</dbReference>
<dbReference type="GO" id="GO:0005840">
    <property type="term" value="C:ribosome"/>
    <property type="evidence" value="ECO:0007669"/>
    <property type="project" value="UniProtKB-KW"/>
</dbReference>
<dbReference type="GO" id="GO:0019843">
    <property type="term" value="F:rRNA binding"/>
    <property type="evidence" value="ECO:0007669"/>
    <property type="project" value="UniProtKB-UniRule"/>
</dbReference>
<dbReference type="GO" id="GO:0003735">
    <property type="term" value="F:structural constituent of ribosome"/>
    <property type="evidence" value="ECO:0007669"/>
    <property type="project" value="InterPro"/>
</dbReference>
<dbReference type="GO" id="GO:0006412">
    <property type="term" value="P:translation"/>
    <property type="evidence" value="ECO:0007669"/>
    <property type="project" value="UniProtKB-UniRule"/>
</dbReference>
<dbReference type="CDD" id="cd06089">
    <property type="entry name" value="KOW_RPL26"/>
    <property type="match status" value="1"/>
</dbReference>
<dbReference type="FunFam" id="2.30.30.30:FF:000004">
    <property type="entry name" value="50S ribosomal protein L24"/>
    <property type="match status" value="1"/>
</dbReference>
<dbReference type="Gene3D" id="2.30.30.30">
    <property type="match status" value="1"/>
</dbReference>
<dbReference type="HAMAP" id="MF_01326_B">
    <property type="entry name" value="Ribosomal_uL24_B"/>
    <property type="match status" value="1"/>
</dbReference>
<dbReference type="InterPro" id="IPR005824">
    <property type="entry name" value="KOW"/>
</dbReference>
<dbReference type="InterPro" id="IPR014722">
    <property type="entry name" value="Rib_uL2_dom2"/>
</dbReference>
<dbReference type="InterPro" id="IPR003256">
    <property type="entry name" value="Ribosomal_uL24"/>
</dbReference>
<dbReference type="InterPro" id="IPR005825">
    <property type="entry name" value="Ribosomal_uL24_CS"/>
</dbReference>
<dbReference type="InterPro" id="IPR041988">
    <property type="entry name" value="Ribosomal_uL24_KOW"/>
</dbReference>
<dbReference type="InterPro" id="IPR008991">
    <property type="entry name" value="Translation_prot_SH3-like_sf"/>
</dbReference>
<dbReference type="NCBIfam" id="TIGR01079">
    <property type="entry name" value="rplX_bact"/>
    <property type="match status" value="1"/>
</dbReference>
<dbReference type="PANTHER" id="PTHR12903">
    <property type="entry name" value="MITOCHONDRIAL RIBOSOMAL PROTEIN L24"/>
    <property type="match status" value="1"/>
</dbReference>
<dbReference type="Pfam" id="PF00467">
    <property type="entry name" value="KOW"/>
    <property type="match status" value="1"/>
</dbReference>
<dbReference type="Pfam" id="PF17136">
    <property type="entry name" value="ribosomal_L24"/>
    <property type="match status" value="1"/>
</dbReference>
<dbReference type="SMART" id="SM00739">
    <property type="entry name" value="KOW"/>
    <property type="match status" value="1"/>
</dbReference>
<dbReference type="SUPFAM" id="SSF50104">
    <property type="entry name" value="Translation proteins SH3-like domain"/>
    <property type="match status" value="1"/>
</dbReference>
<dbReference type="PROSITE" id="PS01108">
    <property type="entry name" value="RIBOSOMAL_L24"/>
    <property type="match status" value="1"/>
</dbReference>
<organism>
    <name type="scientific">Bartonella quintana (strain Toulouse)</name>
    <name type="common">Rochalimaea quintana</name>
    <dbReference type="NCBI Taxonomy" id="283165"/>
    <lineage>
        <taxon>Bacteria</taxon>
        <taxon>Pseudomonadati</taxon>
        <taxon>Pseudomonadota</taxon>
        <taxon>Alphaproteobacteria</taxon>
        <taxon>Hyphomicrobiales</taxon>
        <taxon>Bartonellaceae</taxon>
        <taxon>Bartonella</taxon>
    </lineage>
</organism>
<protein>
    <recommendedName>
        <fullName evidence="1">Large ribosomal subunit protein uL24</fullName>
    </recommendedName>
    <alternativeName>
        <fullName evidence="2">50S ribosomal protein L24</fullName>
    </alternativeName>
</protein>
<feature type="chain" id="PRO_0000241570" description="Large ribosomal subunit protein uL24">
    <location>
        <begin position="1"/>
        <end position="104"/>
    </location>
</feature>
<gene>
    <name evidence="1" type="primary">rplX</name>
    <name type="ordered locus">BQ08120</name>
</gene>
<proteinExistence type="inferred from homology"/>
<keyword id="KW-0687">Ribonucleoprotein</keyword>
<keyword id="KW-0689">Ribosomal protein</keyword>
<keyword id="KW-0694">RNA-binding</keyword>
<keyword id="KW-0699">rRNA-binding</keyword>